<comment type="function">
    <text>Tubulin is the major constituent of microtubules, a cylinder consisting of laterally associated linear protofilaments composed of alpha- and beta-tubulin heterodimers. Microtubules grow by the addition of GTP-tubulin dimers to the microtubule end, where a stabilizing cap forms. Below the cap, tubulin dimers are in GDP-bound state, owing to GTPase activity of alpha-tubulin.</text>
</comment>
<comment type="catalytic activity">
    <reaction evidence="2">
        <text>GTP + H2O = GDP + phosphate + H(+)</text>
        <dbReference type="Rhea" id="RHEA:19669"/>
        <dbReference type="ChEBI" id="CHEBI:15377"/>
        <dbReference type="ChEBI" id="CHEBI:15378"/>
        <dbReference type="ChEBI" id="CHEBI:37565"/>
        <dbReference type="ChEBI" id="CHEBI:43474"/>
        <dbReference type="ChEBI" id="CHEBI:58189"/>
    </reaction>
    <physiologicalReaction direction="left-to-right" evidence="2">
        <dbReference type="Rhea" id="RHEA:19670"/>
    </physiologicalReaction>
</comment>
<comment type="cofactor">
    <cofactor evidence="2">
        <name>Mg(2+)</name>
        <dbReference type="ChEBI" id="CHEBI:18420"/>
    </cofactor>
</comment>
<comment type="subunit">
    <text>Dimer of alpha and beta chains. A typical microtubule is a hollow water-filled tube with an outer diameter of 25 nm and an inner diameter of 15 nM. Alpha-beta heterodimers associate head-to-tail to form protofilaments running lengthwise along the microtubule wall with the beta-tubulin subunit facing the microtubule plus end conferring a structural polarity. Microtubules usually have 13 protofilaments but different protofilament numbers can be found in some organisms and specialized cells.</text>
</comment>
<comment type="subcellular location">
    <subcellularLocation>
        <location>Cytoplasm</location>
        <location>Cytoskeleton</location>
    </subcellularLocation>
</comment>
<comment type="PTM">
    <text evidence="1">Undergoes a tyrosination/detyrosination cycle, the cyclic removal and re-addition of a C-terminal tyrosine residue by the enzymes tubulin tyrosine carboxypeptidase (TTCP) and tubulin tyrosine ligase (TTL), respectively.</text>
</comment>
<comment type="similarity">
    <text evidence="3">Belongs to the tubulin family.</text>
</comment>
<name>TBA2_ANEPH</name>
<keyword id="KW-0963">Cytoplasm</keyword>
<keyword id="KW-0206">Cytoskeleton</keyword>
<keyword id="KW-0342">GTP-binding</keyword>
<keyword id="KW-0378">Hydrolase</keyword>
<keyword id="KW-0493">Microtubule</keyword>
<keyword id="KW-0547">Nucleotide-binding</keyword>
<feature type="chain" id="PRO_0000048134" description="Tubulin alpha-2 chain">
    <location>
        <begin position="1" status="less than"/>
        <end position="364"/>
    </location>
</feature>
<feature type="active site" evidence="2">
    <location>
        <position position="170"/>
    </location>
</feature>
<feature type="binding site" evidence="2">
    <location>
        <position position="59"/>
    </location>
    <ligand>
        <name>GTP</name>
        <dbReference type="ChEBI" id="CHEBI:37565"/>
    </ligand>
</feature>
<feature type="binding site" evidence="2">
    <location>
        <position position="60"/>
    </location>
    <ligand>
        <name>GTP</name>
        <dbReference type="ChEBI" id="CHEBI:37565"/>
    </ligand>
</feature>
<feature type="binding site" evidence="2">
    <location>
        <position position="94"/>
    </location>
    <ligand>
        <name>GTP</name>
        <dbReference type="ChEBI" id="CHEBI:37565"/>
    </ligand>
</feature>
<feature type="binding site" evidence="2">
    <location>
        <position position="121"/>
    </location>
    <ligand>
        <name>GTP</name>
        <dbReference type="ChEBI" id="CHEBI:37565"/>
    </ligand>
</feature>
<feature type="binding site" evidence="2">
    <location>
        <position position="144"/>
    </location>
    <ligand>
        <name>GTP</name>
        <dbReference type="ChEBI" id="CHEBI:37565"/>
    </ligand>
</feature>
<feature type="site" description="Involved in polymerization" evidence="1">
    <location>
        <position position="364"/>
    </location>
</feature>
<feature type="non-terminal residue">
    <location>
        <position position="1"/>
    </location>
</feature>
<dbReference type="EC" id="3.6.5.-" evidence="2"/>
<dbReference type="EMBL" id="X69184">
    <property type="protein sequence ID" value="CAA48928.1"/>
    <property type="molecule type" value="mRNA"/>
</dbReference>
<dbReference type="PIR" id="S32667">
    <property type="entry name" value="S32667"/>
</dbReference>
<dbReference type="SMR" id="P33624"/>
<dbReference type="GO" id="GO:0005737">
    <property type="term" value="C:cytoplasm"/>
    <property type="evidence" value="ECO:0007669"/>
    <property type="project" value="UniProtKB-KW"/>
</dbReference>
<dbReference type="GO" id="GO:0005874">
    <property type="term" value="C:microtubule"/>
    <property type="evidence" value="ECO:0007669"/>
    <property type="project" value="UniProtKB-KW"/>
</dbReference>
<dbReference type="GO" id="GO:0005525">
    <property type="term" value="F:GTP binding"/>
    <property type="evidence" value="ECO:0007669"/>
    <property type="project" value="UniProtKB-KW"/>
</dbReference>
<dbReference type="GO" id="GO:0016787">
    <property type="term" value="F:hydrolase activity"/>
    <property type="evidence" value="ECO:0007669"/>
    <property type="project" value="UniProtKB-KW"/>
</dbReference>
<dbReference type="GO" id="GO:0005200">
    <property type="term" value="F:structural constituent of cytoskeleton"/>
    <property type="evidence" value="ECO:0007669"/>
    <property type="project" value="InterPro"/>
</dbReference>
<dbReference type="GO" id="GO:0007017">
    <property type="term" value="P:microtubule-based process"/>
    <property type="evidence" value="ECO:0007669"/>
    <property type="project" value="InterPro"/>
</dbReference>
<dbReference type="CDD" id="cd02186">
    <property type="entry name" value="alpha_tubulin"/>
    <property type="match status" value="1"/>
</dbReference>
<dbReference type="FunFam" id="1.10.287.600:FF:000001">
    <property type="entry name" value="Tubulin alpha chain"/>
    <property type="match status" value="1"/>
</dbReference>
<dbReference type="FunFam" id="3.30.1330.20:FF:000001">
    <property type="entry name" value="Tubulin alpha chain"/>
    <property type="match status" value="1"/>
</dbReference>
<dbReference type="FunFam" id="3.40.50.1440:FF:000040">
    <property type="entry name" value="Tubulin alpha chain"/>
    <property type="match status" value="1"/>
</dbReference>
<dbReference type="Gene3D" id="1.10.287.600">
    <property type="entry name" value="Helix hairpin bin"/>
    <property type="match status" value="1"/>
</dbReference>
<dbReference type="Gene3D" id="3.30.1330.20">
    <property type="entry name" value="Tubulin/FtsZ, C-terminal domain"/>
    <property type="match status" value="1"/>
</dbReference>
<dbReference type="Gene3D" id="3.40.50.1440">
    <property type="entry name" value="Tubulin/FtsZ, GTPase domain"/>
    <property type="match status" value="1"/>
</dbReference>
<dbReference type="InterPro" id="IPR002452">
    <property type="entry name" value="Alpha_tubulin"/>
</dbReference>
<dbReference type="InterPro" id="IPR008280">
    <property type="entry name" value="Tub_FtsZ_C"/>
</dbReference>
<dbReference type="InterPro" id="IPR000217">
    <property type="entry name" value="Tubulin"/>
</dbReference>
<dbReference type="InterPro" id="IPR037103">
    <property type="entry name" value="Tubulin/FtsZ-like_C"/>
</dbReference>
<dbReference type="InterPro" id="IPR018316">
    <property type="entry name" value="Tubulin/FtsZ_2-layer-sand-dom"/>
</dbReference>
<dbReference type="InterPro" id="IPR036525">
    <property type="entry name" value="Tubulin/FtsZ_GTPase_sf"/>
</dbReference>
<dbReference type="InterPro" id="IPR023123">
    <property type="entry name" value="Tubulin_C"/>
</dbReference>
<dbReference type="InterPro" id="IPR017975">
    <property type="entry name" value="Tubulin_CS"/>
</dbReference>
<dbReference type="InterPro" id="IPR003008">
    <property type="entry name" value="Tubulin_FtsZ_GTPase"/>
</dbReference>
<dbReference type="PANTHER" id="PTHR11588">
    <property type="entry name" value="TUBULIN"/>
    <property type="match status" value="1"/>
</dbReference>
<dbReference type="Pfam" id="PF00091">
    <property type="entry name" value="Tubulin"/>
    <property type="match status" value="1"/>
</dbReference>
<dbReference type="Pfam" id="PF03953">
    <property type="entry name" value="Tubulin_C"/>
    <property type="match status" value="1"/>
</dbReference>
<dbReference type="PRINTS" id="PR01162">
    <property type="entry name" value="ALPHATUBULIN"/>
</dbReference>
<dbReference type="PRINTS" id="PR01161">
    <property type="entry name" value="TUBULIN"/>
</dbReference>
<dbReference type="SMART" id="SM00864">
    <property type="entry name" value="Tubulin"/>
    <property type="match status" value="1"/>
</dbReference>
<dbReference type="SMART" id="SM00865">
    <property type="entry name" value="Tubulin_C"/>
    <property type="match status" value="1"/>
</dbReference>
<dbReference type="SUPFAM" id="SSF55307">
    <property type="entry name" value="Tubulin C-terminal domain-like"/>
    <property type="match status" value="1"/>
</dbReference>
<dbReference type="SUPFAM" id="SSF52490">
    <property type="entry name" value="Tubulin nucleotide-binding domain-like"/>
    <property type="match status" value="1"/>
</dbReference>
<dbReference type="PROSITE" id="PS00227">
    <property type="entry name" value="TUBULIN"/>
    <property type="match status" value="1"/>
</dbReference>
<organism>
    <name type="scientific">Anemia phyllitidis</name>
    <name type="common">Fern</name>
    <name type="synonym">Osmunda phyllitidis</name>
    <dbReference type="NCBI Taxonomy" id="12940"/>
    <lineage>
        <taxon>Eukaryota</taxon>
        <taxon>Viridiplantae</taxon>
        <taxon>Streptophyta</taxon>
        <taxon>Embryophyta</taxon>
        <taxon>Tracheophyta</taxon>
        <taxon>Polypodiopsida</taxon>
        <taxon>Polypodiidae</taxon>
        <taxon>Schizaeales</taxon>
        <taxon>Anemiaceae</taxon>
        <taxon>Anemia</taxon>
    </lineage>
</organism>
<proteinExistence type="evidence at transcript level"/>
<reference key="1">
    <citation type="submission" date="1993-04" db="EMBL/GenBank/DDBJ databases">
        <title>Characterization of the alpha and beta tubulin gene families from Anemia phyllitidis L.Sw.</title>
        <authorList>
            <person name="Moepps B."/>
            <person name="Maucher H.P."/>
            <person name="Bogenberger J.M."/>
            <person name="Schraudolf H."/>
        </authorList>
    </citation>
    <scope>NUCLEOTIDE SEQUENCE [MRNA]</scope>
</reference>
<evidence type="ECO:0000250" key="1"/>
<evidence type="ECO:0000250" key="2">
    <source>
        <dbReference type="UniProtKB" id="P68363"/>
    </source>
</evidence>
<evidence type="ECO:0000305" key="3"/>
<sequence>LFHPEQLISGKEDAANNFARGHYTVGKEIVDLCLDRVRKLSDNCTGLQGFLVFNAVGGGTGSGLGSLLLERLSVDYGKKSKLGFTIYPSPQVSTAVVEPYNSVLSTHSLLEHTDVAVLLDNEAIYDICRRSLLDIERPTYTNLNRLVSQIISSLTTSLRFDGALNVDVTEFQTNLVPYPRIHFMLSSYAPVISAAKAYHEQLSVPEITNAVFEPSSMMAKCDPRHGKYMACCLMYRGDVVPKDVNAAVATIKTKRTVQFVDWCPTGFKCGINYQPPSVVPGGDLAKVQRAVCMISNNTAVAEVFSRIDHKFDLMYAKLAFVHWYVGEGMEEGEFSEAREDLAALEKDYEEVAAEGVDEPEGDDY</sequence>
<gene>
    <name type="primary">TUBA2</name>
</gene>
<accession>P33624</accession>
<protein>
    <recommendedName>
        <fullName>Tubulin alpha-2 chain</fullName>
        <ecNumber evidence="2">3.6.5.-</ecNumber>
    </recommendedName>
</protein>